<protein>
    <recommendedName>
        <fullName>Cytochrome b</fullName>
    </recommendedName>
    <alternativeName>
        <fullName>Complex III subunit 3</fullName>
    </alternativeName>
    <alternativeName>
        <fullName>Complex III subunit III</fullName>
    </alternativeName>
    <alternativeName>
        <fullName>Cytochrome b-c1 complex subunit 3</fullName>
    </alternativeName>
    <alternativeName>
        <fullName>Ubiquinol-cytochrome-c reductase complex cytochrome b subunit</fullName>
    </alternativeName>
</protein>
<proteinExistence type="inferred from homology"/>
<organism>
    <name type="scientific">Addax nasomaculatus</name>
    <name type="common">Addax</name>
    <dbReference type="NCBI Taxonomy" id="59515"/>
    <lineage>
        <taxon>Eukaryota</taxon>
        <taxon>Metazoa</taxon>
        <taxon>Chordata</taxon>
        <taxon>Craniata</taxon>
        <taxon>Vertebrata</taxon>
        <taxon>Euteleostomi</taxon>
        <taxon>Mammalia</taxon>
        <taxon>Eutheria</taxon>
        <taxon>Laurasiatheria</taxon>
        <taxon>Artiodactyla</taxon>
        <taxon>Ruminantia</taxon>
        <taxon>Pecora</taxon>
        <taxon>Bovidae</taxon>
        <taxon>Hippotraginae</taxon>
        <taxon>Addax</taxon>
    </lineage>
</organism>
<dbReference type="EMBL" id="AF034722">
    <property type="protein sequence ID" value="AAC31677.1"/>
    <property type="molecule type" value="Genomic_DNA"/>
</dbReference>
<dbReference type="RefSeq" id="YP_007625730.1">
    <property type="nucleotide sequence ID" value="NC_020674.1"/>
</dbReference>
<dbReference type="SMR" id="O78773"/>
<dbReference type="GeneID" id="14843553"/>
<dbReference type="CTD" id="4519"/>
<dbReference type="GO" id="GO:0005743">
    <property type="term" value="C:mitochondrial inner membrane"/>
    <property type="evidence" value="ECO:0007669"/>
    <property type="project" value="UniProtKB-SubCell"/>
</dbReference>
<dbReference type="GO" id="GO:0045275">
    <property type="term" value="C:respiratory chain complex III"/>
    <property type="evidence" value="ECO:0007669"/>
    <property type="project" value="InterPro"/>
</dbReference>
<dbReference type="GO" id="GO:0046872">
    <property type="term" value="F:metal ion binding"/>
    <property type="evidence" value="ECO:0007669"/>
    <property type="project" value="UniProtKB-KW"/>
</dbReference>
<dbReference type="GO" id="GO:0008121">
    <property type="term" value="F:ubiquinol-cytochrome-c reductase activity"/>
    <property type="evidence" value="ECO:0007669"/>
    <property type="project" value="InterPro"/>
</dbReference>
<dbReference type="GO" id="GO:0006122">
    <property type="term" value="P:mitochondrial electron transport, ubiquinol to cytochrome c"/>
    <property type="evidence" value="ECO:0007669"/>
    <property type="project" value="TreeGrafter"/>
</dbReference>
<dbReference type="CDD" id="cd00290">
    <property type="entry name" value="cytochrome_b_C"/>
    <property type="match status" value="1"/>
</dbReference>
<dbReference type="CDD" id="cd00284">
    <property type="entry name" value="Cytochrome_b_N"/>
    <property type="match status" value="1"/>
</dbReference>
<dbReference type="FunFam" id="1.20.810.10:FF:000002">
    <property type="entry name" value="Cytochrome b"/>
    <property type="match status" value="1"/>
</dbReference>
<dbReference type="Gene3D" id="1.20.810.10">
    <property type="entry name" value="Cytochrome Bc1 Complex, Chain C"/>
    <property type="match status" value="1"/>
</dbReference>
<dbReference type="InterPro" id="IPR005798">
    <property type="entry name" value="Cyt_b/b6_C"/>
</dbReference>
<dbReference type="InterPro" id="IPR036150">
    <property type="entry name" value="Cyt_b/b6_C_sf"/>
</dbReference>
<dbReference type="InterPro" id="IPR005797">
    <property type="entry name" value="Cyt_b/b6_N"/>
</dbReference>
<dbReference type="InterPro" id="IPR027387">
    <property type="entry name" value="Cytb/b6-like_sf"/>
</dbReference>
<dbReference type="InterPro" id="IPR030689">
    <property type="entry name" value="Cytochrome_b"/>
</dbReference>
<dbReference type="InterPro" id="IPR048260">
    <property type="entry name" value="Cytochrome_b_C_euk/bac"/>
</dbReference>
<dbReference type="InterPro" id="IPR048259">
    <property type="entry name" value="Cytochrome_b_N_euk/bac"/>
</dbReference>
<dbReference type="InterPro" id="IPR016174">
    <property type="entry name" value="Di-haem_cyt_TM"/>
</dbReference>
<dbReference type="PANTHER" id="PTHR19271">
    <property type="entry name" value="CYTOCHROME B"/>
    <property type="match status" value="1"/>
</dbReference>
<dbReference type="PANTHER" id="PTHR19271:SF16">
    <property type="entry name" value="CYTOCHROME B"/>
    <property type="match status" value="1"/>
</dbReference>
<dbReference type="Pfam" id="PF00032">
    <property type="entry name" value="Cytochrom_B_C"/>
    <property type="match status" value="1"/>
</dbReference>
<dbReference type="Pfam" id="PF00033">
    <property type="entry name" value="Cytochrome_B"/>
    <property type="match status" value="1"/>
</dbReference>
<dbReference type="PIRSF" id="PIRSF038885">
    <property type="entry name" value="COB"/>
    <property type="match status" value="1"/>
</dbReference>
<dbReference type="SUPFAM" id="SSF81648">
    <property type="entry name" value="a domain/subunit of cytochrome bc1 complex (Ubiquinol-cytochrome c reductase)"/>
    <property type="match status" value="1"/>
</dbReference>
<dbReference type="SUPFAM" id="SSF81342">
    <property type="entry name" value="Transmembrane di-heme cytochromes"/>
    <property type="match status" value="1"/>
</dbReference>
<dbReference type="PROSITE" id="PS51003">
    <property type="entry name" value="CYTB_CTER"/>
    <property type="match status" value="1"/>
</dbReference>
<dbReference type="PROSITE" id="PS51002">
    <property type="entry name" value="CYTB_NTER"/>
    <property type="match status" value="1"/>
</dbReference>
<name>CYB_ADDNA</name>
<keyword id="KW-0249">Electron transport</keyword>
<keyword id="KW-0349">Heme</keyword>
<keyword id="KW-0408">Iron</keyword>
<keyword id="KW-0472">Membrane</keyword>
<keyword id="KW-0479">Metal-binding</keyword>
<keyword id="KW-0496">Mitochondrion</keyword>
<keyword id="KW-0999">Mitochondrion inner membrane</keyword>
<keyword id="KW-0679">Respiratory chain</keyword>
<keyword id="KW-0812">Transmembrane</keyword>
<keyword id="KW-1133">Transmembrane helix</keyword>
<keyword id="KW-0813">Transport</keyword>
<keyword id="KW-0830">Ubiquinone</keyword>
<reference key="1">
    <citation type="journal article" date="1999" name="J. Mammal. Evol.">
        <title>Molecular systematics of the subfamily Caprinae (Artiodactyla, Bovidae) as determined from cytochrome b sequences.</title>
        <authorList>
            <person name="Hassanin A."/>
            <person name="Pasquet E."/>
            <person name="Vigne J.-D."/>
        </authorList>
    </citation>
    <scope>NUCLEOTIDE SEQUENCE [GENOMIC DNA]</scope>
</reference>
<gene>
    <name type="primary">MT-CYB</name>
    <name type="synonym">COB</name>
    <name type="synonym">CYTB</name>
    <name type="synonym">MTCYB</name>
</gene>
<comment type="function">
    <text evidence="2">Component of the ubiquinol-cytochrome c reductase complex (complex III or cytochrome b-c1 complex) that is part of the mitochondrial respiratory chain. The b-c1 complex mediates electron transfer from ubiquinol to cytochrome c. Contributes to the generation of a proton gradient across the mitochondrial membrane that is then used for ATP synthesis.</text>
</comment>
<comment type="cofactor">
    <cofactor evidence="2">
        <name>heme b</name>
        <dbReference type="ChEBI" id="CHEBI:60344"/>
    </cofactor>
    <text evidence="2">Binds 2 heme b groups non-covalently.</text>
</comment>
<comment type="subunit">
    <text evidence="2">The cytochrome bc1 complex contains 11 subunits: 3 respiratory subunits (MT-CYB, CYC1 and UQCRFS1), 2 core proteins (UQCRC1 and UQCRC2) and 6 low-molecular weight proteins (UQCRH/QCR6, UQCRB/QCR7, UQCRQ/QCR8, UQCR10/QCR9, UQCR11/QCR10 and a cleavage product of UQCRFS1). This cytochrome bc1 complex then forms a dimer.</text>
</comment>
<comment type="subcellular location">
    <subcellularLocation>
        <location evidence="2">Mitochondrion inner membrane</location>
        <topology evidence="2">Multi-pass membrane protein</topology>
    </subcellularLocation>
</comment>
<comment type="miscellaneous">
    <text evidence="1">Heme 1 (or BL or b562) is low-potential and absorbs at about 562 nm, and heme 2 (or BH or b566) is high-potential and absorbs at about 566 nm.</text>
</comment>
<comment type="similarity">
    <text evidence="3 4">Belongs to the cytochrome b family.</text>
</comment>
<comment type="caution">
    <text evidence="2">The full-length protein contains only eight transmembrane helices, not nine as predicted by bioinformatics tools.</text>
</comment>
<accession>O78773</accession>
<feature type="chain" id="PRO_0000060531" description="Cytochrome b">
    <location>
        <begin position="1"/>
        <end position="379"/>
    </location>
</feature>
<feature type="transmembrane region" description="Helical" evidence="2">
    <location>
        <begin position="33"/>
        <end position="53"/>
    </location>
</feature>
<feature type="transmembrane region" description="Helical" evidence="2">
    <location>
        <begin position="77"/>
        <end position="98"/>
    </location>
</feature>
<feature type="transmembrane region" description="Helical" evidence="2">
    <location>
        <begin position="113"/>
        <end position="133"/>
    </location>
</feature>
<feature type="transmembrane region" description="Helical" evidence="2">
    <location>
        <begin position="178"/>
        <end position="198"/>
    </location>
</feature>
<feature type="transmembrane region" description="Helical" evidence="2">
    <location>
        <begin position="226"/>
        <end position="246"/>
    </location>
</feature>
<feature type="transmembrane region" description="Helical" evidence="2">
    <location>
        <begin position="288"/>
        <end position="308"/>
    </location>
</feature>
<feature type="transmembrane region" description="Helical" evidence="2">
    <location>
        <begin position="320"/>
        <end position="340"/>
    </location>
</feature>
<feature type="transmembrane region" description="Helical" evidence="2">
    <location>
        <begin position="347"/>
        <end position="367"/>
    </location>
</feature>
<feature type="binding site" description="axial binding residue" evidence="2">
    <location>
        <position position="83"/>
    </location>
    <ligand>
        <name>heme b</name>
        <dbReference type="ChEBI" id="CHEBI:60344"/>
        <label>b562</label>
    </ligand>
    <ligandPart>
        <name>Fe</name>
        <dbReference type="ChEBI" id="CHEBI:18248"/>
    </ligandPart>
</feature>
<feature type="binding site" description="axial binding residue" evidence="2">
    <location>
        <position position="97"/>
    </location>
    <ligand>
        <name>heme b</name>
        <dbReference type="ChEBI" id="CHEBI:60344"/>
        <label>b566</label>
    </ligand>
    <ligandPart>
        <name>Fe</name>
        <dbReference type="ChEBI" id="CHEBI:18248"/>
    </ligandPart>
</feature>
<feature type="binding site" description="axial binding residue" evidence="2">
    <location>
        <position position="182"/>
    </location>
    <ligand>
        <name>heme b</name>
        <dbReference type="ChEBI" id="CHEBI:60344"/>
        <label>b562</label>
    </ligand>
    <ligandPart>
        <name>Fe</name>
        <dbReference type="ChEBI" id="CHEBI:18248"/>
    </ligandPart>
</feature>
<feature type="binding site" description="axial binding residue" evidence="2">
    <location>
        <position position="196"/>
    </location>
    <ligand>
        <name>heme b</name>
        <dbReference type="ChEBI" id="CHEBI:60344"/>
        <label>b566</label>
    </ligand>
    <ligandPart>
        <name>Fe</name>
        <dbReference type="ChEBI" id="CHEBI:18248"/>
    </ligandPart>
</feature>
<feature type="binding site" evidence="2">
    <location>
        <position position="201"/>
    </location>
    <ligand>
        <name>a ubiquinone</name>
        <dbReference type="ChEBI" id="CHEBI:16389"/>
    </ligand>
</feature>
<evidence type="ECO:0000250" key="1"/>
<evidence type="ECO:0000250" key="2">
    <source>
        <dbReference type="UniProtKB" id="P00157"/>
    </source>
</evidence>
<evidence type="ECO:0000255" key="3">
    <source>
        <dbReference type="PROSITE-ProRule" id="PRU00967"/>
    </source>
</evidence>
<evidence type="ECO:0000255" key="4">
    <source>
        <dbReference type="PROSITE-ProRule" id="PRU00968"/>
    </source>
</evidence>
<geneLocation type="mitochondrion"/>
<sequence length="379" mass="42591">MTNIRKTHPLMKIVNNAFIDLPAPSNISSWWNFGSLLGICLILQILTGLFLAMHYTSDTTTAFSSVAHICRDVNYGWIIRYMHANGASMFFICLFMHVGRGLYYGSYTFLETWNVGVILLFTTMATAFMGYVLPWGQMSFWGATVITNLLSAIPYIGTDLVEWIWGGFSVDKATLTRFFAFHFILPFIIAALAMVHLLFLHETGSNNPTGISSDTDKIPFHPYYTIKDILGALLLILVLMLLVLFTPDLLGDPDNYTPANPLSTPPHIKPEWYFLFAYAILRSIPNKLGGVLALVLSILILVLVPALHTSKQRSMMFRPISQCIFWILVADLLTLTWIGGQPVEHPYIIIGQLASITYFLLILVLMPVASTIENNLLKW</sequence>